<accession>P51805</accession>
<accession>Q5HY36</accession>
<comment type="function">
    <text>Coreceptor for SEMA3A and SEMA3F. Necessary for signaling by class 3 semaphorins and subsequent remodeling of the cytoskeleton. Plays a role in axon guidance in the developing nervous system. Regulates the migration of sympathetic neurons, but not of neural crest precursors. Required for normal dendrite spine morphology in pyramidal neurons. May play a role in regulating semaphorin-mediated programmed cell death in the developing nervous system. Class 3 semaphorins bind to a complex composed of a neuropilin and a plexin. The plexin modulates the affinity of the complex for specific semaphorins, and its cytoplasmic domain is required for the activation of down-stream signaling events in the cytoplasm.</text>
</comment>
<comment type="subunit">
    <text evidence="4">Interacts with CBFA2T3/MTG16.</text>
</comment>
<comment type="interaction">
    <interactant intactId="EBI-7135904">
        <id>P51805</id>
    </interactant>
    <interactant intactId="EBI-1190217">
        <id>O75081</id>
        <label>CBFA2T3</label>
    </interactant>
    <organismsDiffer>false</organismsDiffer>
    <experiments>2</experiments>
</comment>
<comment type="subcellular location">
    <subcellularLocation>
        <location evidence="1">Cell membrane</location>
        <topology evidence="1">Single-pass type I membrane protein</topology>
    </subcellularLocation>
</comment>
<comment type="similarity">
    <text evidence="6">Belongs to the plexin family.</text>
</comment>
<protein>
    <recommendedName>
        <fullName>Plexin-A3</fullName>
    </recommendedName>
    <alternativeName>
        <fullName>Plexin-4</fullName>
    </alternativeName>
    <alternativeName>
        <fullName>Semaphorin receptor SEX</fullName>
    </alternativeName>
</protein>
<organism>
    <name type="scientific">Homo sapiens</name>
    <name type="common">Human</name>
    <dbReference type="NCBI Taxonomy" id="9606"/>
    <lineage>
        <taxon>Eukaryota</taxon>
        <taxon>Metazoa</taxon>
        <taxon>Chordata</taxon>
        <taxon>Craniata</taxon>
        <taxon>Vertebrata</taxon>
        <taxon>Euteleostomi</taxon>
        <taxon>Mammalia</taxon>
        <taxon>Eutheria</taxon>
        <taxon>Euarchontoglires</taxon>
        <taxon>Primates</taxon>
        <taxon>Haplorrhini</taxon>
        <taxon>Catarrhini</taxon>
        <taxon>Hominidae</taxon>
        <taxon>Homo</taxon>
    </lineage>
</organism>
<feature type="signal peptide" evidence="2">
    <location>
        <begin position="1"/>
        <end position="19"/>
    </location>
</feature>
<feature type="chain" id="PRO_0000024670" description="Plexin-A3">
    <location>
        <begin position="20"/>
        <end position="1871"/>
    </location>
</feature>
<feature type="topological domain" description="Extracellular" evidence="2">
    <location>
        <begin position="20"/>
        <end position="1220"/>
    </location>
</feature>
<feature type="transmembrane region" description="Helical" evidence="2">
    <location>
        <begin position="1221"/>
        <end position="1241"/>
    </location>
</feature>
<feature type="topological domain" description="Cytoplasmic" evidence="2">
    <location>
        <begin position="1242"/>
        <end position="1871"/>
    </location>
</feature>
<feature type="domain" description="Sema" evidence="3">
    <location>
        <begin position="20"/>
        <end position="488"/>
    </location>
</feature>
<feature type="domain" description="IPT/TIG 1">
    <location>
        <begin position="840"/>
        <end position="933"/>
    </location>
</feature>
<feature type="domain" description="IPT/TIG 2">
    <location>
        <begin position="935"/>
        <end position="1020"/>
    </location>
</feature>
<feature type="domain" description="IPT/TIG 3">
    <location>
        <begin position="1023"/>
        <end position="1122"/>
    </location>
</feature>
<feature type="domain" description="IPT/TIG 4">
    <location>
        <begin position="1125"/>
        <end position="1211"/>
    </location>
</feature>
<feature type="modified residue" description="Phosphoserine" evidence="7">
    <location>
        <position position="1596"/>
    </location>
</feature>
<feature type="glycosylation site" description="N-linked (GlcNAc...) asparagine" evidence="2">
    <location>
        <position position="59"/>
    </location>
</feature>
<feature type="glycosylation site" description="N-linked (GlcNAc...) asparagine" evidence="2">
    <location>
        <position position="548"/>
    </location>
</feature>
<feature type="glycosylation site" description="N-linked (GlcNAc...) asparagine" evidence="2">
    <location>
        <position position="637"/>
    </location>
</feature>
<feature type="glycosylation site" description="N-linked (GlcNAc...) asparagine" evidence="2">
    <location>
        <position position="738"/>
    </location>
</feature>
<feature type="glycosylation site" description="N-linked (GlcNAc...) asparagine" evidence="2">
    <location>
        <position position="746"/>
    </location>
</feature>
<feature type="glycosylation site" description="N-linked (GlcNAc...) asparagine" evidence="2">
    <location>
        <position position="1009"/>
    </location>
</feature>
<feature type="glycosylation site" description="N-linked (GlcNAc...) asparagine" evidence="2">
    <location>
        <position position="1036"/>
    </location>
</feature>
<feature type="glycosylation site" description="N-linked (GlcNAc...) asparagine" evidence="2">
    <location>
        <position position="1073"/>
    </location>
</feature>
<feature type="glycosylation site" description="N-linked (GlcNAc...) asparagine" evidence="2">
    <location>
        <position position="1115"/>
    </location>
</feature>
<feature type="glycosylation site" description="N-linked (GlcNAc...) asparagine" evidence="2">
    <location>
        <position position="1162"/>
    </location>
</feature>
<feature type="disulfide bond" evidence="3">
    <location>
        <begin position="77"/>
        <end position="86"/>
    </location>
</feature>
<feature type="disulfide bond" evidence="3">
    <location>
        <begin position="112"/>
        <end position="120"/>
    </location>
</feature>
<feature type="disulfide bond" evidence="3">
    <location>
        <begin position="266"/>
        <end position="387"/>
    </location>
</feature>
<feature type="disulfide bond" evidence="3">
    <location>
        <begin position="282"/>
        <end position="338"/>
    </location>
</feature>
<feature type="disulfide bond" evidence="3">
    <location>
        <begin position="356"/>
        <end position="375"/>
    </location>
</feature>
<feature type="disulfide bond" evidence="3">
    <location>
        <begin position="491"/>
        <end position="508"/>
    </location>
</feature>
<feature type="disulfide bond" evidence="3">
    <location>
        <begin position="497"/>
        <end position="539"/>
    </location>
</feature>
<feature type="disulfide bond" evidence="3">
    <location>
        <begin position="500"/>
        <end position="517"/>
    </location>
</feature>
<feature type="disulfide bond" evidence="3">
    <location>
        <begin position="511"/>
        <end position="523"/>
    </location>
</feature>
<feature type="disulfide bond" evidence="3">
    <location>
        <begin position="574"/>
        <end position="594"/>
    </location>
</feature>
<feature type="sequence variant" id="VAR_050595" description="In dbSNP:rs34585333.">
    <original>G</original>
    <variation>S</variation>
    <location>
        <position position="384"/>
    </location>
</feature>
<feature type="sequence variant" id="VAR_050596" description="In dbSNP:rs36115591.">
    <original>G</original>
    <variation>S</variation>
    <location>
        <position position="413"/>
    </location>
</feature>
<feature type="sequence variant" id="VAR_050597" description="In dbSNP:rs5945430.">
    <original>E</original>
    <variation>D</variation>
    <location>
        <position position="863"/>
    </location>
</feature>
<feature type="sequence variant" id="VAR_083660" description="In dbSNP:rs200880623." evidence="5">
    <original>V</original>
    <variation>M</variation>
    <location>
        <position position="1238"/>
    </location>
</feature>
<feature type="sequence conflict" description="In Ref. 1; CAA61132." evidence="6" ref="1">
    <original>F</original>
    <variation>L</variation>
    <location>
        <position position="222"/>
    </location>
</feature>
<reference key="1">
    <citation type="journal article" date="1996" name="Proc. Natl. Acad. Sci. U.S.A.">
        <title>A family of transmembrane proteins with homology to the MET-hepatocyte growth factor receptor.</title>
        <authorList>
            <person name="Maestrini E."/>
            <person name="Tamagnone L."/>
            <person name="Longati P."/>
            <person name="Cremona O."/>
            <person name="Gulisano M."/>
            <person name="Bione S."/>
            <person name="Tamanini F."/>
            <person name="Neel B.G."/>
            <person name="Toniolo D."/>
            <person name="Comoglio P.M."/>
        </authorList>
    </citation>
    <scope>NUCLEOTIDE SEQUENCE [MRNA]</scope>
    <source>
        <tissue>Embryo</tissue>
        <tissue>Fetal brain</tissue>
        <tissue>Skeletal muscle</tissue>
    </source>
</reference>
<reference key="2">
    <citation type="journal article" date="2005" name="Nature">
        <title>The DNA sequence of the human X chromosome.</title>
        <authorList>
            <person name="Ross M.T."/>
            <person name="Grafham D.V."/>
            <person name="Coffey A.J."/>
            <person name="Scherer S."/>
            <person name="McLay K."/>
            <person name="Muzny D."/>
            <person name="Platzer M."/>
            <person name="Howell G.R."/>
            <person name="Burrows C."/>
            <person name="Bird C.P."/>
            <person name="Frankish A."/>
            <person name="Lovell F.L."/>
            <person name="Howe K.L."/>
            <person name="Ashurst J.L."/>
            <person name="Fulton R.S."/>
            <person name="Sudbrak R."/>
            <person name="Wen G."/>
            <person name="Jones M.C."/>
            <person name="Hurles M.E."/>
            <person name="Andrews T.D."/>
            <person name="Scott C.E."/>
            <person name="Searle S."/>
            <person name="Ramser J."/>
            <person name="Whittaker A."/>
            <person name="Deadman R."/>
            <person name="Carter N.P."/>
            <person name="Hunt S.E."/>
            <person name="Chen R."/>
            <person name="Cree A."/>
            <person name="Gunaratne P."/>
            <person name="Havlak P."/>
            <person name="Hodgson A."/>
            <person name="Metzker M.L."/>
            <person name="Richards S."/>
            <person name="Scott G."/>
            <person name="Steffen D."/>
            <person name="Sodergren E."/>
            <person name="Wheeler D.A."/>
            <person name="Worley K.C."/>
            <person name="Ainscough R."/>
            <person name="Ambrose K.D."/>
            <person name="Ansari-Lari M.A."/>
            <person name="Aradhya S."/>
            <person name="Ashwell R.I."/>
            <person name="Babbage A.K."/>
            <person name="Bagguley C.L."/>
            <person name="Ballabio A."/>
            <person name="Banerjee R."/>
            <person name="Barker G.E."/>
            <person name="Barlow K.F."/>
            <person name="Barrett I.P."/>
            <person name="Bates K.N."/>
            <person name="Beare D.M."/>
            <person name="Beasley H."/>
            <person name="Beasley O."/>
            <person name="Beck A."/>
            <person name="Bethel G."/>
            <person name="Blechschmidt K."/>
            <person name="Brady N."/>
            <person name="Bray-Allen S."/>
            <person name="Bridgeman A.M."/>
            <person name="Brown A.J."/>
            <person name="Brown M.J."/>
            <person name="Bonnin D."/>
            <person name="Bruford E.A."/>
            <person name="Buhay C."/>
            <person name="Burch P."/>
            <person name="Burford D."/>
            <person name="Burgess J."/>
            <person name="Burrill W."/>
            <person name="Burton J."/>
            <person name="Bye J.M."/>
            <person name="Carder C."/>
            <person name="Carrel L."/>
            <person name="Chako J."/>
            <person name="Chapman J.C."/>
            <person name="Chavez D."/>
            <person name="Chen E."/>
            <person name="Chen G."/>
            <person name="Chen Y."/>
            <person name="Chen Z."/>
            <person name="Chinault C."/>
            <person name="Ciccodicola A."/>
            <person name="Clark S.Y."/>
            <person name="Clarke G."/>
            <person name="Clee C.M."/>
            <person name="Clegg S."/>
            <person name="Clerc-Blankenburg K."/>
            <person name="Clifford K."/>
            <person name="Cobley V."/>
            <person name="Cole C.G."/>
            <person name="Conquer J.S."/>
            <person name="Corby N."/>
            <person name="Connor R.E."/>
            <person name="David R."/>
            <person name="Davies J."/>
            <person name="Davis C."/>
            <person name="Davis J."/>
            <person name="Delgado O."/>
            <person name="Deshazo D."/>
            <person name="Dhami P."/>
            <person name="Ding Y."/>
            <person name="Dinh H."/>
            <person name="Dodsworth S."/>
            <person name="Draper H."/>
            <person name="Dugan-Rocha S."/>
            <person name="Dunham A."/>
            <person name="Dunn M."/>
            <person name="Durbin K.J."/>
            <person name="Dutta I."/>
            <person name="Eades T."/>
            <person name="Ellwood M."/>
            <person name="Emery-Cohen A."/>
            <person name="Errington H."/>
            <person name="Evans K.L."/>
            <person name="Faulkner L."/>
            <person name="Francis F."/>
            <person name="Frankland J."/>
            <person name="Fraser A.E."/>
            <person name="Galgoczy P."/>
            <person name="Gilbert J."/>
            <person name="Gill R."/>
            <person name="Gloeckner G."/>
            <person name="Gregory S.G."/>
            <person name="Gribble S."/>
            <person name="Griffiths C."/>
            <person name="Grocock R."/>
            <person name="Gu Y."/>
            <person name="Gwilliam R."/>
            <person name="Hamilton C."/>
            <person name="Hart E.A."/>
            <person name="Hawes A."/>
            <person name="Heath P.D."/>
            <person name="Heitmann K."/>
            <person name="Hennig S."/>
            <person name="Hernandez J."/>
            <person name="Hinzmann B."/>
            <person name="Ho S."/>
            <person name="Hoffs M."/>
            <person name="Howden P.J."/>
            <person name="Huckle E.J."/>
            <person name="Hume J."/>
            <person name="Hunt P.J."/>
            <person name="Hunt A.R."/>
            <person name="Isherwood J."/>
            <person name="Jacob L."/>
            <person name="Johnson D."/>
            <person name="Jones S."/>
            <person name="de Jong P.J."/>
            <person name="Joseph S.S."/>
            <person name="Keenan S."/>
            <person name="Kelly S."/>
            <person name="Kershaw J.K."/>
            <person name="Khan Z."/>
            <person name="Kioschis P."/>
            <person name="Klages S."/>
            <person name="Knights A.J."/>
            <person name="Kosiura A."/>
            <person name="Kovar-Smith C."/>
            <person name="Laird G.K."/>
            <person name="Langford C."/>
            <person name="Lawlor S."/>
            <person name="Leversha M."/>
            <person name="Lewis L."/>
            <person name="Liu W."/>
            <person name="Lloyd C."/>
            <person name="Lloyd D.M."/>
            <person name="Loulseged H."/>
            <person name="Loveland J.E."/>
            <person name="Lovell J.D."/>
            <person name="Lozado R."/>
            <person name="Lu J."/>
            <person name="Lyne R."/>
            <person name="Ma J."/>
            <person name="Maheshwari M."/>
            <person name="Matthews L.H."/>
            <person name="McDowall J."/>
            <person name="McLaren S."/>
            <person name="McMurray A."/>
            <person name="Meidl P."/>
            <person name="Meitinger T."/>
            <person name="Milne S."/>
            <person name="Miner G."/>
            <person name="Mistry S.L."/>
            <person name="Morgan M."/>
            <person name="Morris S."/>
            <person name="Mueller I."/>
            <person name="Mullikin J.C."/>
            <person name="Nguyen N."/>
            <person name="Nordsiek G."/>
            <person name="Nyakatura G."/>
            <person name="O'dell C.N."/>
            <person name="Okwuonu G."/>
            <person name="Palmer S."/>
            <person name="Pandian R."/>
            <person name="Parker D."/>
            <person name="Parrish J."/>
            <person name="Pasternak S."/>
            <person name="Patel D."/>
            <person name="Pearce A.V."/>
            <person name="Pearson D.M."/>
            <person name="Pelan S.E."/>
            <person name="Perez L."/>
            <person name="Porter K.M."/>
            <person name="Ramsey Y."/>
            <person name="Reichwald K."/>
            <person name="Rhodes S."/>
            <person name="Ridler K.A."/>
            <person name="Schlessinger D."/>
            <person name="Schueler M.G."/>
            <person name="Sehra H.K."/>
            <person name="Shaw-Smith C."/>
            <person name="Shen H."/>
            <person name="Sheridan E.M."/>
            <person name="Shownkeen R."/>
            <person name="Skuce C.D."/>
            <person name="Smith M.L."/>
            <person name="Sotheran E.C."/>
            <person name="Steingruber H.E."/>
            <person name="Steward C.A."/>
            <person name="Storey R."/>
            <person name="Swann R.M."/>
            <person name="Swarbreck D."/>
            <person name="Tabor P.E."/>
            <person name="Taudien S."/>
            <person name="Taylor T."/>
            <person name="Teague B."/>
            <person name="Thomas K."/>
            <person name="Thorpe A."/>
            <person name="Timms K."/>
            <person name="Tracey A."/>
            <person name="Trevanion S."/>
            <person name="Tromans A.C."/>
            <person name="d'Urso M."/>
            <person name="Verduzco D."/>
            <person name="Villasana D."/>
            <person name="Waldron L."/>
            <person name="Wall M."/>
            <person name="Wang Q."/>
            <person name="Warren J."/>
            <person name="Warry G.L."/>
            <person name="Wei X."/>
            <person name="West A."/>
            <person name="Whitehead S.L."/>
            <person name="Whiteley M.N."/>
            <person name="Wilkinson J.E."/>
            <person name="Willey D.L."/>
            <person name="Williams G."/>
            <person name="Williams L."/>
            <person name="Williamson A."/>
            <person name="Williamson H."/>
            <person name="Wilming L."/>
            <person name="Woodmansey R.L."/>
            <person name="Wray P.W."/>
            <person name="Yen J."/>
            <person name="Zhang J."/>
            <person name="Zhou J."/>
            <person name="Zoghbi H."/>
            <person name="Zorilla S."/>
            <person name="Buck D."/>
            <person name="Reinhardt R."/>
            <person name="Poustka A."/>
            <person name="Rosenthal A."/>
            <person name="Lehrach H."/>
            <person name="Meindl A."/>
            <person name="Minx P.J."/>
            <person name="Hillier L.W."/>
            <person name="Willard H.F."/>
            <person name="Wilson R.K."/>
            <person name="Waterston R.H."/>
            <person name="Rice C.M."/>
            <person name="Vaudin M."/>
            <person name="Coulson A."/>
            <person name="Nelson D.L."/>
            <person name="Weinstock G."/>
            <person name="Sulston J.E."/>
            <person name="Durbin R.M."/>
            <person name="Hubbard T."/>
            <person name="Gibbs R.A."/>
            <person name="Beck S."/>
            <person name="Rogers J."/>
            <person name="Bentley D.R."/>
        </authorList>
    </citation>
    <scope>NUCLEOTIDE SEQUENCE [LARGE SCALE GENOMIC DNA]</scope>
</reference>
<reference key="3">
    <citation type="journal article" date="2010" name="FEBS Lett.">
        <title>Myeloid translocation gene 16b is a dual A-kinase anchoring protein that interacts selectively with plexins in a phospho-regulated manner.</title>
        <authorList>
            <person name="Fiedler S.E."/>
            <person name="Schillace R.V."/>
            <person name="Daniels C.J."/>
            <person name="Andrews S.F."/>
            <person name="Carr D.W."/>
        </authorList>
    </citation>
    <scope>INTERACTION WITH CBFA2T3/MTG16</scope>
</reference>
<reference key="4">
    <citation type="journal article" date="2013" name="J. Proteome Res.">
        <title>Toward a comprehensive characterization of a human cancer cell phosphoproteome.</title>
        <authorList>
            <person name="Zhou H."/>
            <person name="Di Palma S."/>
            <person name="Preisinger C."/>
            <person name="Peng M."/>
            <person name="Polat A.N."/>
            <person name="Heck A.J."/>
            <person name="Mohammed S."/>
        </authorList>
    </citation>
    <scope>PHOSPHORYLATION [LARGE SCALE ANALYSIS] AT SER-1596</scope>
    <scope>IDENTIFICATION BY MASS SPECTROMETRY [LARGE SCALE ANALYSIS]</scope>
    <source>
        <tissue>Erythroleukemia</tissue>
    </source>
</reference>
<reference key="5">
    <citation type="journal article" date="2017" name="Hum. Mutat.">
        <title>CSNK2B splice site mutations in patients cause intellectual disability with or without myoclonic epilepsy.</title>
        <authorList>
            <person name="Poirier K."/>
            <person name="Hubert L."/>
            <person name="Viot G."/>
            <person name="Rio M."/>
            <person name="Billuart P."/>
            <person name="Besmond C."/>
            <person name="Bienvenu T."/>
        </authorList>
    </citation>
    <scope>VARIANT MET-1238</scope>
</reference>
<sequence length="1871" mass="207717">MPSVCLLLLLFLAVGGALGNRPFRAFVVTDTTLTHLAVHRVTGEVFVGAVNRVFKLAPNLTELRAHVTGPVEDNARCYPPPSMRVCAHRLAPVDNINKLLLIDYAARRLVACGSIWQGICQFLRLDDLFKLGEPHHRKEHYLSGAQEPDSMAGVIVEQGQGPSKLFVGTAVDGKSEYFPTLSSRKLISDEDSADMFSLVYQDEFVSSQIKIPSDTLSLYPAFDIYYIYGFVSASFVYFLTLQLDTQQTLLDTAGEKFFTSKIVRMCAGDSEFYSYVEFPIGCSWRGVEYRLVQSAHLAKPGLLLAQALGVPADEDVLFTIFSQGQKNRASPPRQTILCLFTLSNINAHIRRRIQSCYRGEGTLALPWLLNKELPCINTPMQINGNFCGLVLNQPLGGLHVIEGLPLLADSTDGMASVAAYTYRQHSVVFIGTRSGSLKKVRVDGFQDAHLYETVPVVDGSPILRDLLFSPDHRHIYLLSEKQVSQLPVETCEQYQSCAACLGSGDPHCGWCVLRHRCCREGACLGASAPHGFAEELSKCVQVRVRPNNVSVTSPGVQLTVTLHNVPDLSAGVSCAFEAAAENEAVLLPSGELLCPSPSLQELRALTRGHGATRTVRLQLLSKETGVRFAGADFVFYNCSVLQSCMSCVGSPYPCHWCKYRHTCTSRPHECSFQEGRVHSPEGCPEILPSGDLLIPVGVMQPLTLRAKNLPQPQSGQKNYECVVRVQGRQQRVPAVRFNSSSVQCQNASYSYEGDEHGDTELDFSVVWDGDFPIDKPPSFRALLYKCWAQRPSCGLCLKADPRFNCGWCISEHRCQLRTHCPAPKTNWMHLSQKGTRCSHPRITQIHPLVGPKEGGTRVTIVGENLGLLSREVGLRVAGVRCNSIPAEYISAERIVCEMEESLVPSPPPGPVELCVGDCSADFRTQSEQVYSFVTPTFDQVSPSRGPASGGTRLTISGSSLDAGSRVTVTVRDSECQFVRRDAKAIVCISPLSTLGPSQAPITLAIDRANISSPGLIYTYTQDPTVTRLEPTWSIINGSTAITVSGTHLLTVQEPRVRAKYRGIETTNTCQVINDTAMLCKAPGIFLGRPQPRAQGEHPDEFGFLLDHVQTARSLNRSSFTYYPDPSFEPLGPSGVLDVKPGSHVVLKGKNLIPAAAGSSRLNYTVLIGGQPCSLTVSDTQLLCDSPSQTGRQPVMVLVGGLEFWLGTLHISAERALTLPAMMGLAAGGGLLLLAITAVLVAYKRKTQDADRTLKRLQLQMDNLESRVALECKEAFAELQTDINELTNHMDEVQIPFLDYRTYAVRVLFPGIEAHPVLKELDTPPNVEKALRLFGQLLHSRAFVLTFIHTLEAQSSFSMRDRGTVASLTMVALQSRLDYATGLLKQLLADLIEKNLESKNHPKLLLRRTESVAEKMLTNWFTFLLHKFLKECAGEPLFLLYCAIKQQMEKGPIDAITGEARYSLSEDKLIRQQIDYKTLTLHCVCPENEGSAQVPVKVLNCDSITQAKDKLLDTVYKGIPYSQRPKAEDMDLEWRQGRMTRIILQDEDVTTKIECDWKRLNSLAHYQVTDGSLVALVPKQVSAYNMANSFTFTRSLSRYESLLRTASSPDSLRSRAPMITPDQETGTKLWHLVKNHDHADHREGDRGSKMVSEIYLTRLLATKGTLQKFVDDLFETVFSTAHRGSALPLAIKYMFDFLDEQADQRQISDPDVRHTWKSNCLPLRFWVNVIKNPQFVFDIHKNSITDACLSVVAQTFMDSCSTSEHRLGKDSPSNKLLYAKDIPNYKSWVERYYRDIAKMASISDQDMDAYLVEQSRLHASDFSVLSALNELYFYVTKYRQEILTALDRDASCRKHKLRQKLEQIISLVSSDS</sequence>
<gene>
    <name type="primary">PLXNA3</name>
    <name type="synonym">PLXN4</name>
    <name type="synonym">SEX</name>
</gene>
<name>PLXA3_HUMAN</name>
<keyword id="KW-1003">Cell membrane</keyword>
<keyword id="KW-1015">Disulfide bond</keyword>
<keyword id="KW-0325">Glycoprotein</keyword>
<keyword id="KW-0472">Membrane</keyword>
<keyword id="KW-0597">Phosphoprotein</keyword>
<keyword id="KW-1267">Proteomics identification</keyword>
<keyword id="KW-0675">Receptor</keyword>
<keyword id="KW-1185">Reference proteome</keyword>
<keyword id="KW-0677">Repeat</keyword>
<keyword id="KW-0732">Signal</keyword>
<keyword id="KW-0812">Transmembrane</keyword>
<keyword id="KW-1133">Transmembrane helix</keyword>
<evidence type="ECO:0000250" key="1"/>
<evidence type="ECO:0000255" key="2"/>
<evidence type="ECO:0000255" key="3">
    <source>
        <dbReference type="PROSITE-ProRule" id="PRU00352"/>
    </source>
</evidence>
<evidence type="ECO:0000269" key="4">
    <source>
    </source>
</evidence>
<evidence type="ECO:0000269" key="5">
    <source>
    </source>
</evidence>
<evidence type="ECO:0000305" key="6"/>
<evidence type="ECO:0007744" key="7">
    <source>
    </source>
</evidence>
<dbReference type="EMBL" id="X87852">
    <property type="protein sequence ID" value="CAA61132.1"/>
    <property type="molecule type" value="mRNA"/>
</dbReference>
<dbReference type="EMBL" id="BX936365">
    <property type="status" value="NOT_ANNOTATED_CDS"/>
    <property type="molecule type" value="Genomic_DNA"/>
</dbReference>
<dbReference type="CCDS" id="CCDS14752.1"/>
<dbReference type="RefSeq" id="NP_059984.3">
    <property type="nucleotide sequence ID" value="NM_017514.5"/>
</dbReference>
<dbReference type="SMR" id="P51805"/>
<dbReference type="BioGRID" id="120717">
    <property type="interactions" value="165"/>
</dbReference>
<dbReference type="CORUM" id="P51805"/>
<dbReference type="DIP" id="DIP-57386N"/>
<dbReference type="FunCoup" id="P51805">
    <property type="interactions" value="1130"/>
</dbReference>
<dbReference type="IntAct" id="P51805">
    <property type="interactions" value="100"/>
</dbReference>
<dbReference type="MINT" id="P51805"/>
<dbReference type="STRING" id="9606.ENSP00000358696"/>
<dbReference type="GlyCosmos" id="P51805">
    <property type="glycosylation" value="10 sites, No reported glycans"/>
</dbReference>
<dbReference type="GlyGen" id="P51805">
    <property type="glycosylation" value="11 sites, 2 N-linked glycans (3 sites)"/>
</dbReference>
<dbReference type="iPTMnet" id="P51805"/>
<dbReference type="PhosphoSitePlus" id="P51805"/>
<dbReference type="BioMuta" id="PLXNA3"/>
<dbReference type="DMDM" id="118572690"/>
<dbReference type="jPOST" id="P51805"/>
<dbReference type="MassIVE" id="P51805"/>
<dbReference type="PaxDb" id="9606-ENSP00000358696"/>
<dbReference type="PeptideAtlas" id="P51805"/>
<dbReference type="ProteomicsDB" id="56401"/>
<dbReference type="Pumba" id="P51805"/>
<dbReference type="Antibodypedia" id="31267">
    <property type="antibodies" value="59 antibodies from 18 providers"/>
</dbReference>
<dbReference type="DNASU" id="55558"/>
<dbReference type="Ensembl" id="ENST00000369682.4">
    <property type="protein sequence ID" value="ENSP00000358696.3"/>
    <property type="gene ID" value="ENSG00000130827.6"/>
</dbReference>
<dbReference type="GeneID" id="55558"/>
<dbReference type="KEGG" id="hsa:55558"/>
<dbReference type="MANE-Select" id="ENST00000369682.4">
    <property type="protein sequence ID" value="ENSP00000358696.3"/>
    <property type="RefSeq nucleotide sequence ID" value="NM_017514.5"/>
    <property type="RefSeq protein sequence ID" value="NP_059984.3"/>
</dbReference>
<dbReference type="UCSC" id="uc004flm.5">
    <property type="organism name" value="human"/>
</dbReference>
<dbReference type="AGR" id="HGNC:9101"/>
<dbReference type="CTD" id="55558"/>
<dbReference type="DisGeNET" id="55558"/>
<dbReference type="GeneCards" id="PLXNA3"/>
<dbReference type="HGNC" id="HGNC:9101">
    <property type="gene designation" value="PLXNA3"/>
</dbReference>
<dbReference type="HPA" id="ENSG00000130827">
    <property type="expression patterns" value="Low tissue specificity"/>
</dbReference>
<dbReference type="MalaCards" id="PLXNA3"/>
<dbReference type="MIM" id="300022">
    <property type="type" value="gene"/>
</dbReference>
<dbReference type="neXtProt" id="NX_P51805"/>
<dbReference type="OpenTargets" id="ENSG00000130827"/>
<dbReference type="PharmGKB" id="PA33427"/>
<dbReference type="VEuPathDB" id="HostDB:ENSG00000130827"/>
<dbReference type="eggNOG" id="KOG3610">
    <property type="taxonomic scope" value="Eukaryota"/>
</dbReference>
<dbReference type="GeneTree" id="ENSGT01050000244850"/>
<dbReference type="HOGENOM" id="CLU_001436_2_0_1"/>
<dbReference type="InParanoid" id="P51805"/>
<dbReference type="OMA" id="CPEILPR"/>
<dbReference type="OrthoDB" id="125363at2759"/>
<dbReference type="PAN-GO" id="P51805">
    <property type="GO annotations" value="9 GO annotations based on evolutionary models"/>
</dbReference>
<dbReference type="PhylomeDB" id="P51805"/>
<dbReference type="TreeFam" id="TF312962"/>
<dbReference type="PathwayCommons" id="P51805"/>
<dbReference type="Reactome" id="R-HSA-399954">
    <property type="pathway name" value="Sema3A PAK dependent Axon repulsion"/>
</dbReference>
<dbReference type="Reactome" id="R-HSA-399955">
    <property type="pathway name" value="SEMA3A-Plexin repulsion signaling by inhibiting Integrin adhesion"/>
</dbReference>
<dbReference type="Reactome" id="R-HSA-399956">
    <property type="pathway name" value="CRMPs in Sema3A signaling"/>
</dbReference>
<dbReference type="SignaLink" id="P51805"/>
<dbReference type="BioGRID-ORCS" id="55558">
    <property type="hits" value="9 hits in 779 CRISPR screens"/>
</dbReference>
<dbReference type="ChiTaRS" id="PLXNA3">
    <property type="organism name" value="human"/>
</dbReference>
<dbReference type="GeneWiki" id="PLXNA3"/>
<dbReference type="GenomeRNAi" id="55558"/>
<dbReference type="Pharos" id="P51805">
    <property type="development level" value="Tbio"/>
</dbReference>
<dbReference type="PRO" id="PR:P51805"/>
<dbReference type="Proteomes" id="UP000005640">
    <property type="component" value="Chromosome X"/>
</dbReference>
<dbReference type="RNAct" id="P51805">
    <property type="molecule type" value="protein"/>
</dbReference>
<dbReference type="Bgee" id="ENSG00000130827">
    <property type="expression patterns" value="Expressed in adenohypophysis and 132 other cell types or tissues"/>
</dbReference>
<dbReference type="GO" id="GO:0005886">
    <property type="term" value="C:plasma membrane"/>
    <property type="evidence" value="ECO:0000318"/>
    <property type="project" value="GO_Central"/>
</dbReference>
<dbReference type="GO" id="GO:0002116">
    <property type="term" value="C:semaphorin receptor complex"/>
    <property type="evidence" value="ECO:0000318"/>
    <property type="project" value="GO_Central"/>
</dbReference>
<dbReference type="GO" id="GO:0017154">
    <property type="term" value="F:semaphorin receptor activity"/>
    <property type="evidence" value="ECO:0000250"/>
    <property type="project" value="UniProtKB"/>
</dbReference>
<dbReference type="GO" id="GO:0048846">
    <property type="term" value="P:axon extension involved in axon guidance"/>
    <property type="evidence" value="ECO:0007669"/>
    <property type="project" value="Ensembl"/>
</dbReference>
<dbReference type="GO" id="GO:0007411">
    <property type="term" value="P:axon guidance"/>
    <property type="evidence" value="ECO:0000250"/>
    <property type="project" value="UniProtKB"/>
</dbReference>
<dbReference type="GO" id="GO:0021785">
    <property type="term" value="P:branchiomotor neuron axon guidance"/>
    <property type="evidence" value="ECO:0000250"/>
    <property type="project" value="UniProtKB"/>
</dbReference>
<dbReference type="GO" id="GO:0021612">
    <property type="term" value="P:facial nerve structural organization"/>
    <property type="evidence" value="ECO:0000250"/>
    <property type="project" value="UniProtKB"/>
</dbReference>
<dbReference type="GO" id="GO:0021828">
    <property type="term" value="P:gonadotrophin-releasing hormone neuronal migration to the hypothalamus"/>
    <property type="evidence" value="ECO:0007669"/>
    <property type="project" value="Ensembl"/>
</dbReference>
<dbReference type="GO" id="GO:0021766">
    <property type="term" value="P:hippocampus development"/>
    <property type="evidence" value="ECO:0000250"/>
    <property type="project" value="UniProtKB"/>
</dbReference>
<dbReference type="GO" id="GO:0008045">
    <property type="term" value="P:motor neuron axon guidance"/>
    <property type="evidence" value="ECO:0000318"/>
    <property type="project" value="GO_Central"/>
</dbReference>
<dbReference type="GO" id="GO:0050919">
    <property type="term" value="P:negative chemotaxis"/>
    <property type="evidence" value="ECO:0007669"/>
    <property type="project" value="Ensembl"/>
</dbReference>
<dbReference type="GO" id="GO:0048843">
    <property type="term" value="P:negative regulation of axon extension involved in axon guidance"/>
    <property type="evidence" value="ECO:0007669"/>
    <property type="project" value="Ensembl"/>
</dbReference>
<dbReference type="GO" id="GO:0097485">
    <property type="term" value="P:neuron projection guidance"/>
    <property type="evidence" value="ECO:0000250"/>
    <property type="project" value="UniProtKB"/>
</dbReference>
<dbReference type="GO" id="GO:0021628">
    <property type="term" value="P:olfactory nerve formation"/>
    <property type="evidence" value="ECO:0007669"/>
    <property type="project" value="Ensembl"/>
</dbReference>
<dbReference type="GO" id="GO:0051495">
    <property type="term" value="P:positive regulation of cytoskeleton organization"/>
    <property type="evidence" value="ECO:0000250"/>
    <property type="project" value="UniProtKB"/>
</dbReference>
<dbReference type="GO" id="GO:0021860">
    <property type="term" value="P:pyramidal neuron development"/>
    <property type="evidence" value="ECO:0000250"/>
    <property type="project" value="UniProtKB"/>
</dbReference>
<dbReference type="GO" id="GO:0030334">
    <property type="term" value="P:regulation of cell migration"/>
    <property type="evidence" value="ECO:0000318"/>
    <property type="project" value="GO_Central"/>
</dbReference>
<dbReference type="GO" id="GO:0071526">
    <property type="term" value="P:semaphorin-plexin signaling pathway"/>
    <property type="evidence" value="ECO:0000250"/>
    <property type="project" value="UniProtKB"/>
</dbReference>
<dbReference type="GO" id="GO:0007416">
    <property type="term" value="P:synapse assembly"/>
    <property type="evidence" value="ECO:0000318"/>
    <property type="project" value="GO_Central"/>
</dbReference>
<dbReference type="GO" id="GO:0021637">
    <property type="term" value="P:trigeminal nerve structural organization"/>
    <property type="evidence" value="ECO:0000250"/>
    <property type="project" value="UniProtKB"/>
</dbReference>
<dbReference type="CDD" id="cd00603">
    <property type="entry name" value="IPT_PCSR"/>
    <property type="match status" value="1"/>
</dbReference>
<dbReference type="CDD" id="cd01180">
    <property type="entry name" value="IPT_plexin_repeat1"/>
    <property type="match status" value="1"/>
</dbReference>
<dbReference type="CDD" id="cd01179">
    <property type="entry name" value="IPT_plexin_repeat2"/>
    <property type="match status" value="1"/>
</dbReference>
<dbReference type="CDD" id="cd01181">
    <property type="entry name" value="IPT_plexin_repeat3"/>
    <property type="match status" value="1"/>
</dbReference>
<dbReference type="CDD" id="cd12790">
    <property type="entry name" value="RasGAP_plexin_A"/>
    <property type="match status" value="1"/>
</dbReference>
<dbReference type="CDD" id="cd11273">
    <property type="entry name" value="Sema_plexin_A3"/>
    <property type="match status" value="1"/>
</dbReference>
<dbReference type="FunFam" id="1.10.506.10:FF:000005">
    <property type="entry name" value="Plexin A1"/>
    <property type="match status" value="1"/>
</dbReference>
<dbReference type="FunFam" id="1.10.506.10:FF:000006">
    <property type="entry name" value="Plexin A1"/>
    <property type="match status" value="1"/>
</dbReference>
<dbReference type="FunFam" id="2.60.40.10:FF:000123">
    <property type="entry name" value="Plexin A1"/>
    <property type="match status" value="1"/>
</dbReference>
<dbReference type="FunFam" id="2.130.10.10:FF:000006">
    <property type="entry name" value="Plexin A2"/>
    <property type="match status" value="1"/>
</dbReference>
<dbReference type="FunFam" id="2.60.40.10:FF:000071">
    <property type="entry name" value="Plexin A2"/>
    <property type="match status" value="1"/>
</dbReference>
<dbReference type="FunFam" id="3.10.20.90:FF:000157">
    <property type="entry name" value="Plexin A3"/>
    <property type="match status" value="1"/>
</dbReference>
<dbReference type="FunFam" id="2.60.40.10:FF:000329">
    <property type="entry name" value="Plexin A4"/>
    <property type="match status" value="1"/>
</dbReference>
<dbReference type="FunFam" id="2.60.40.10:FF:001973">
    <property type="entry name" value="Plexin A4, B"/>
    <property type="match status" value="1"/>
</dbReference>
<dbReference type="FunFam" id="2.60.40.10:FF:000630">
    <property type="entry name" value="Plexin D1"/>
    <property type="match status" value="1"/>
</dbReference>
<dbReference type="Gene3D" id="1.10.506.10">
    <property type="entry name" value="GTPase Activation - p120gap, domain 1"/>
    <property type="match status" value="1"/>
</dbReference>
<dbReference type="Gene3D" id="2.60.40.10">
    <property type="entry name" value="Immunoglobulins"/>
    <property type="match status" value="5"/>
</dbReference>
<dbReference type="Gene3D" id="3.10.20.90">
    <property type="entry name" value="Phosphatidylinositol 3-kinase Catalytic Subunit, Chain A, domain 1"/>
    <property type="match status" value="1"/>
</dbReference>
<dbReference type="Gene3D" id="2.130.10.10">
    <property type="entry name" value="YVTN repeat-like/Quinoprotein amine dehydrogenase"/>
    <property type="match status" value="1"/>
</dbReference>
<dbReference type="InterPro" id="IPR013783">
    <property type="entry name" value="Ig-like_fold"/>
</dbReference>
<dbReference type="InterPro" id="IPR014756">
    <property type="entry name" value="Ig_E-set"/>
</dbReference>
<dbReference type="InterPro" id="IPR002909">
    <property type="entry name" value="IPT_dom"/>
</dbReference>
<dbReference type="InterPro" id="IPR031148">
    <property type="entry name" value="Plexin"/>
</dbReference>
<dbReference type="InterPro" id="IPR013548">
    <property type="entry name" value="Plexin_cytoplasmic_RasGAP_dom"/>
</dbReference>
<dbReference type="InterPro" id="IPR046800">
    <property type="entry name" value="Plexin_RBD"/>
</dbReference>
<dbReference type="InterPro" id="IPR002165">
    <property type="entry name" value="Plexin_repeat"/>
</dbReference>
<dbReference type="InterPro" id="IPR016201">
    <property type="entry name" value="PSI"/>
</dbReference>
<dbReference type="InterPro" id="IPR008936">
    <property type="entry name" value="Rho_GTPase_activation_prot"/>
</dbReference>
<dbReference type="InterPro" id="IPR001627">
    <property type="entry name" value="Semap_dom"/>
</dbReference>
<dbReference type="InterPro" id="IPR036352">
    <property type="entry name" value="Semap_dom_sf"/>
</dbReference>
<dbReference type="InterPro" id="IPR041019">
    <property type="entry name" value="TIG1_plexin"/>
</dbReference>
<dbReference type="InterPro" id="IPR041362">
    <property type="entry name" value="TIG2_plexin"/>
</dbReference>
<dbReference type="InterPro" id="IPR015943">
    <property type="entry name" value="WD40/YVTN_repeat-like_dom_sf"/>
</dbReference>
<dbReference type="PANTHER" id="PTHR22625">
    <property type="entry name" value="PLEXIN"/>
    <property type="match status" value="1"/>
</dbReference>
<dbReference type="PANTHER" id="PTHR22625:SF32">
    <property type="entry name" value="PLEXIN-A3"/>
    <property type="match status" value="1"/>
</dbReference>
<dbReference type="Pfam" id="PF08337">
    <property type="entry name" value="Plexin_cytopl"/>
    <property type="match status" value="1"/>
</dbReference>
<dbReference type="Pfam" id="PF20170">
    <property type="entry name" value="Plexin_RBD"/>
    <property type="match status" value="1"/>
</dbReference>
<dbReference type="Pfam" id="PF01437">
    <property type="entry name" value="PSI"/>
    <property type="match status" value="2"/>
</dbReference>
<dbReference type="Pfam" id="PF24479">
    <property type="entry name" value="PSI_PlexinA-B"/>
    <property type="match status" value="1"/>
</dbReference>
<dbReference type="Pfam" id="PF01403">
    <property type="entry name" value="Sema"/>
    <property type="match status" value="1"/>
</dbReference>
<dbReference type="Pfam" id="PF01833">
    <property type="entry name" value="TIG"/>
    <property type="match status" value="4"/>
</dbReference>
<dbReference type="Pfam" id="PF18020">
    <property type="entry name" value="TIG_2"/>
    <property type="match status" value="1"/>
</dbReference>
<dbReference type="Pfam" id="PF17960">
    <property type="entry name" value="TIG_plexin"/>
    <property type="match status" value="1"/>
</dbReference>
<dbReference type="SMART" id="SM00429">
    <property type="entry name" value="IPT"/>
    <property type="match status" value="4"/>
</dbReference>
<dbReference type="SMART" id="SM00423">
    <property type="entry name" value="PSI"/>
    <property type="match status" value="3"/>
</dbReference>
<dbReference type="SMART" id="SM00630">
    <property type="entry name" value="Sema"/>
    <property type="match status" value="1"/>
</dbReference>
<dbReference type="SUPFAM" id="SSF81296">
    <property type="entry name" value="E set domains"/>
    <property type="match status" value="4"/>
</dbReference>
<dbReference type="SUPFAM" id="SSF48350">
    <property type="entry name" value="GTPase activation domain, GAP"/>
    <property type="match status" value="1"/>
</dbReference>
<dbReference type="SUPFAM" id="SSF103575">
    <property type="entry name" value="Plexin repeat"/>
    <property type="match status" value="1"/>
</dbReference>
<dbReference type="SUPFAM" id="SSF101912">
    <property type="entry name" value="Sema domain"/>
    <property type="match status" value="1"/>
</dbReference>
<dbReference type="PROSITE" id="PS51004">
    <property type="entry name" value="SEMA"/>
    <property type="match status" value="1"/>
</dbReference>
<proteinExistence type="evidence at protein level"/>